<gene>
    <name type="primary">NINL</name>
    <name type="synonym">KIAA0980</name>
    <name type="synonym">NLP</name>
</gene>
<dbReference type="EMBL" id="EU718622">
    <property type="protein sequence ID" value="ACE78295.1"/>
    <property type="molecule type" value="mRNA"/>
</dbReference>
<dbReference type="EMBL" id="AB023197">
    <property type="protein sequence ID" value="BAA76824.1"/>
    <property type="status" value="ALT_INIT"/>
    <property type="molecule type" value="mRNA"/>
</dbReference>
<dbReference type="EMBL" id="AL031672">
    <property type="status" value="NOT_ANNOTATED_CDS"/>
    <property type="molecule type" value="Genomic_DNA"/>
</dbReference>
<dbReference type="EMBL" id="AL161802">
    <property type="status" value="NOT_ANNOTATED_CDS"/>
    <property type="molecule type" value="Genomic_DNA"/>
</dbReference>
<dbReference type="EMBL" id="BC036380">
    <property type="protein sequence ID" value="AAH36380.1"/>
    <property type="molecule type" value="mRNA"/>
</dbReference>
<dbReference type="EMBL" id="AK293991">
    <property type="protein sequence ID" value="BAH11644.1"/>
    <property type="status" value="ALT_SEQ"/>
    <property type="molecule type" value="mRNA"/>
</dbReference>
<dbReference type="CCDS" id="CCDS33452.1">
    <molecule id="Q9Y2I6-1"/>
</dbReference>
<dbReference type="CCDS" id="CCDS82605.1">
    <molecule id="Q9Y2I6-2"/>
</dbReference>
<dbReference type="RefSeq" id="NP_001305155.1">
    <molecule id="Q9Y2I6-2"/>
    <property type="nucleotide sequence ID" value="NM_001318226.2"/>
</dbReference>
<dbReference type="RefSeq" id="NP_079452.3">
    <molecule id="Q9Y2I6-1"/>
    <property type="nucleotide sequence ID" value="NM_025176.5"/>
</dbReference>
<dbReference type="SMR" id="Q9Y2I6"/>
<dbReference type="BioGRID" id="116630">
    <property type="interactions" value="462"/>
</dbReference>
<dbReference type="ELM" id="Q9Y2I6"/>
<dbReference type="FunCoup" id="Q9Y2I6">
    <property type="interactions" value="584"/>
</dbReference>
<dbReference type="IntAct" id="Q9Y2I6">
    <property type="interactions" value="220"/>
</dbReference>
<dbReference type="MINT" id="Q9Y2I6"/>
<dbReference type="STRING" id="9606.ENSP00000278886"/>
<dbReference type="GlyGen" id="Q9Y2I6">
    <property type="glycosylation" value="1 site, 1 O-linked glycan (1 site)"/>
</dbReference>
<dbReference type="iPTMnet" id="Q9Y2I6"/>
<dbReference type="PhosphoSitePlus" id="Q9Y2I6"/>
<dbReference type="BioMuta" id="NINL"/>
<dbReference type="DMDM" id="118601093"/>
<dbReference type="jPOST" id="Q9Y2I6"/>
<dbReference type="MassIVE" id="Q9Y2I6"/>
<dbReference type="PaxDb" id="9606-ENSP00000278886"/>
<dbReference type="PeptideAtlas" id="Q9Y2I6"/>
<dbReference type="ProteomicsDB" id="85799">
    <molecule id="Q9Y2I6-1"/>
</dbReference>
<dbReference type="ProteomicsDB" id="85800">
    <molecule id="Q9Y2I6-2"/>
</dbReference>
<dbReference type="Antibodypedia" id="628">
    <property type="antibodies" value="53 antibodies from 16 providers"/>
</dbReference>
<dbReference type="DNASU" id="22981"/>
<dbReference type="Ensembl" id="ENST00000278886.11">
    <molecule id="Q9Y2I6-1"/>
    <property type="protein sequence ID" value="ENSP00000278886.6"/>
    <property type="gene ID" value="ENSG00000101004.16"/>
</dbReference>
<dbReference type="GeneID" id="22981"/>
<dbReference type="KEGG" id="hsa:22981"/>
<dbReference type="MANE-Select" id="ENST00000278886.11">
    <property type="protein sequence ID" value="ENSP00000278886.6"/>
    <property type="RefSeq nucleotide sequence ID" value="NM_025176.6"/>
    <property type="RefSeq protein sequence ID" value="NP_079452.3"/>
</dbReference>
<dbReference type="UCSC" id="uc002wux.3">
    <molecule id="Q9Y2I6-1"/>
    <property type="organism name" value="human"/>
</dbReference>
<dbReference type="AGR" id="HGNC:29163"/>
<dbReference type="CTD" id="22981"/>
<dbReference type="DisGeNET" id="22981"/>
<dbReference type="GeneCards" id="NINL"/>
<dbReference type="HGNC" id="HGNC:29163">
    <property type="gene designation" value="NINL"/>
</dbReference>
<dbReference type="HPA" id="ENSG00000101004">
    <property type="expression patterns" value="Low tissue specificity"/>
</dbReference>
<dbReference type="MIM" id="609580">
    <property type="type" value="gene"/>
</dbReference>
<dbReference type="neXtProt" id="NX_Q9Y2I6"/>
<dbReference type="OpenTargets" id="ENSG00000101004"/>
<dbReference type="PharmGKB" id="PA165392435"/>
<dbReference type="VEuPathDB" id="HostDB:ENSG00000101004"/>
<dbReference type="eggNOG" id="ENOG502R2VA">
    <property type="taxonomic scope" value="Eukaryota"/>
</dbReference>
<dbReference type="GeneTree" id="ENSGT00660000095541"/>
<dbReference type="HOGENOM" id="CLU_001462_0_0_1"/>
<dbReference type="InParanoid" id="Q9Y2I6"/>
<dbReference type="OMA" id="SYHQGQV"/>
<dbReference type="OrthoDB" id="5799458at2759"/>
<dbReference type="PAN-GO" id="Q9Y2I6">
    <property type="GO annotations" value="2 GO annotations based on evolutionary models"/>
</dbReference>
<dbReference type="PhylomeDB" id="Q9Y2I6"/>
<dbReference type="TreeFam" id="TF325139"/>
<dbReference type="PathwayCommons" id="Q9Y2I6"/>
<dbReference type="Reactome" id="R-HSA-2565942">
    <property type="pathway name" value="Regulation of PLK1 Activity at G2/M Transition"/>
</dbReference>
<dbReference type="Reactome" id="R-HSA-380259">
    <property type="pathway name" value="Loss of Nlp from mitotic centrosomes"/>
</dbReference>
<dbReference type="Reactome" id="R-HSA-380270">
    <property type="pathway name" value="Recruitment of mitotic centrosome proteins and complexes"/>
</dbReference>
<dbReference type="Reactome" id="R-HSA-380284">
    <property type="pathway name" value="Loss of proteins required for interphase microtubule organization from the centrosome"/>
</dbReference>
<dbReference type="Reactome" id="R-HSA-380320">
    <property type="pathway name" value="Recruitment of NuMA to mitotic centrosomes"/>
</dbReference>
<dbReference type="Reactome" id="R-HSA-5620912">
    <property type="pathway name" value="Anchoring of the basal body to the plasma membrane"/>
</dbReference>
<dbReference type="Reactome" id="R-HSA-8854518">
    <property type="pathway name" value="AURKA Activation by TPX2"/>
</dbReference>
<dbReference type="SignaLink" id="Q9Y2I6"/>
<dbReference type="SIGNOR" id="Q9Y2I6"/>
<dbReference type="BioGRID-ORCS" id="22981">
    <property type="hits" value="14 hits in 1160 CRISPR screens"/>
</dbReference>
<dbReference type="CD-CODE" id="8C2F96ED">
    <property type="entry name" value="Centrosome"/>
</dbReference>
<dbReference type="ChiTaRS" id="NINL">
    <property type="organism name" value="human"/>
</dbReference>
<dbReference type="GeneWiki" id="NINL"/>
<dbReference type="GenomeRNAi" id="22981"/>
<dbReference type="Pharos" id="Q9Y2I6">
    <property type="development level" value="Tbio"/>
</dbReference>
<dbReference type="PRO" id="PR:Q9Y2I6"/>
<dbReference type="Proteomes" id="UP000005640">
    <property type="component" value="Chromosome 20"/>
</dbReference>
<dbReference type="RNAct" id="Q9Y2I6">
    <property type="molecule type" value="protein"/>
</dbReference>
<dbReference type="Bgee" id="ENSG00000101004">
    <property type="expression patterns" value="Expressed in renal medulla and 166 other cell types or tissues"/>
</dbReference>
<dbReference type="ExpressionAtlas" id="Q9Y2I6">
    <property type="expression patterns" value="baseline and differential"/>
</dbReference>
<dbReference type="GO" id="GO:0005813">
    <property type="term" value="C:centrosome"/>
    <property type="evidence" value="ECO:0000314"/>
    <property type="project" value="UniProtKB"/>
</dbReference>
<dbReference type="GO" id="GO:0005829">
    <property type="term" value="C:cytosol"/>
    <property type="evidence" value="ECO:0000304"/>
    <property type="project" value="Reactome"/>
</dbReference>
<dbReference type="GO" id="GO:0005874">
    <property type="term" value="C:microtubule"/>
    <property type="evidence" value="ECO:0007669"/>
    <property type="project" value="UniProtKB-KW"/>
</dbReference>
<dbReference type="GO" id="GO:0005509">
    <property type="term" value="F:calcium ion binding"/>
    <property type="evidence" value="ECO:0007669"/>
    <property type="project" value="InterPro"/>
</dbReference>
<dbReference type="GO" id="GO:0034454">
    <property type="term" value="P:microtubule anchoring at centrosome"/>
    <property type="evidence" value="ECO:0000318"/>
    <property type="project" value="GO_Central"/>
</dbReference>
<dbReference type="CDD" id="cd00051">
    <property type="entry name" value="EFh"/>
    <property type="match status" value="1"/>
</dbReference>
<dbReference type="FunFam" id="1.10.238.10:FF:000094">
    <property type="entry name" value="ninein isoform X7"/>
    <property type="match status" value="1"/>
</dbReference>
<dbReference type="FunFam" id="1.10.238.10:FF:000209">
    <property type="entry name" value="Ninein like"/>
    <property type="match status" value="1"/>
</dbReference>
<dbReference type="Gene3D" id="1.10.238.10">
    <property type="entry name" value="EF-hand"/>
    <property type="match status" value="2"/>
</dbReference>
<dbReference type="InterPro" id="IPR011992">
    <property type="entry name" value="EF-hand-dom_pair"/>
</dbReference>
<dbReference type="InterPro" id="IPR018247">
    <property type="entry name" value="EF_Hand_1_Ca_BS"/>
</dbReference>
<dbReference type="InterPro" id="IPR002048">
    <property type="entry name" value="EF_hand_dom"/>
</dbReference>
<dbReference type="PANTHER" id="PTHR18905">
    <property type="entry name" value="NINEIN"/>
    <property type="match status" value="1"/>
</dbReference>
<dbReference type="PANTHER" id="PTHR18905:SF12">
    <property type="entry name" value="NINEIN-LIKE PROTEIN"/>
    <property type="match status" value="1"/>
</dbReference>
<dbReference type="Pfam" id="PF13499">
    <property type="entry name" value="EF-hand_7"/>
    <property type="match status" value="1"/>
</dbReference>
<dbReference type="SMART" id="SM00054">
    <property type="entry name" value="EFh"/>
    <property type="match status" value="3"/>
</dbReference>
<dbReference type="SUPFAM" id="SSF47473">
    <property type="entry name" value="EF-hand"/>
    <property type="match status" value="1"/>
</dbReference>
<dbReference type="PROSITE" id="PS00018">
    <property type="entry name" value="EF_HAND_1"/>
    <property type="match status" value="1"/>
</dbReference>
<dbReference type="PROSITE" id="PS50222">
    <property type="entry name" value="EF_HAND_2"/>
    <property type="match status" value="4"/>
</dbReference>
<evidence type="ECO:0000250" key="1">
    <source>
        <dbReference type="UniProtKB" id="G9G127"/>
    </source>
</evidence>
<evidence type="ECO:0000250" key="2">
    <source>
        <dbReference type="UniProtKB" id="Q6ZQ12"/>
    </source>
</evidence>
<evidence type="ECO:0000255" key="3"/>
<evidence type="ECO:0000255" key="4">
    <source>
        <dbReference type="PROSITE-ProRule" id="PRU00448"/>
    </source>
</evidence>
<evidence type="ECO:0000256" key="5">
    <source>
        <dbReference type="SAM" id="MobiDB-lite"/>
    </source>
</evidence>
<evidence type="ECO:0000269" key="6">
    <source>
    </source>
</evidence>
<evidence type="ECO:0000269" key="7">
    <source>
    </source>
</evidence>
<evidence type="ECO:0000269" key="8">
    <source>
    </source>
</evidence>
<evidence type="ECO:0000269" key="9">
    <source>
    </source>
</evidence>
<evidence type="ECO:0000269" key="10">
    <source>
    </source>
</evidence>
<evidence type="ECO:0000269" key="11">
    <source>
    </source>
</evidence>
<evidence type="ECO:0000269" key="12">
    <source>
    </source>
</evidence>
<evidence type="ECO:0000303" key="13">
    <source>
    </source>
</evidence>
<evidence type="ECO:0000305" key="14"/>
<name>NINL_HUMAN</name>
<proteinExistence type="evidence at protein level"/>
<reference key="1">
    <citation type="journal article" date="2009" name="Hum. Mol. Genet.">
        <title>Usher syndrome and Leber congenital amaurosis are molecularly linked via a novel isoform of the centrosomal ninein-like protein.</title>
        <authorList>
            <person name="van Wijk E."/>
            <person name="Kersten F.F.J."/>
            <person name="Kartono A."/>
            <person name="Mans D.A."/>
            <person name="Brandwijk K."/>
            <person name="Letteboer S.J.F."/>
            <person name="Peters T.A."/>
            <person name="Maerker T."/>
            <person name="Yan X."/>
            <person name="Cremers C.W.R.J."/>
            <person name="Cremers F.P.M."/>
            <person name="Wolfrum U."/>
            <person name="Roepman R."/>
            <person name="Kremer H."/>
        </authorList>
    </citation>
    <scope>NUCLEOTIDE SEQUENCE [MRNA] (ISOFORM 2)</scope>
    <scope>INTERACTION WITH LCA5 AND USH2A</scope>
    <scope>SUBCELLULAR LOCATION</scope>
    <scope>TISSUE SPECIFICITY</scope>
</reference>
<reference key="2">
    <citation type="journal article" date="1999" name="DNA Res.">
        <title>Prediction of the coding sequences of unidentified human genes. XIII. The complete sequences of 100 new cDNA clones from brain which code for large proteins in vitro.</title>
        <authorList>
            <person name="Nagase T."/>
            <person name="Ishikawa K."/>
            <person name="Suyama M."/>
            <person name="Kikuno R."/>
            <person name="Hirosawa M."/>
            <person name="Miyajima N."/>
            <person name="Tanaka A."/>
            <person name="Kotani H."/>
            <person name="Nomura N."/>
            <person name="Ohara O."/>
        </authorList>
    </citation>
    <scope>NUCLEOTIDE SEQUENCE [LARGE SCALE MRNA] (ISOFORM 1)</scope>
    <source>
        <tissue>Brain</tissue>
    </source>
</reference>
<reference key="3">
    <citation type="journal article" date="2001" name="Nature">
        <title>The DNA sequence and comparative analysis of human chromosome 20.</title>
        <authorList>
            <person name="Deloukas P."/>
            <person name="Matthews L.H."/>
            <person name="Ashurst J.L."/>
            <person name="Burton J."/>
            <person name="Gilbert J.G.R."/>
            <person name="Jones M."/>
            <person name="Stavrides G."/>
            <person name="Almeida J.P."/>
            <person name="Babbage A.K."/>
            <person name="Bagguley C.L."/>
            <person name="Bailey J."/>
            <person name="Barlow K.F."/>
            <person name="Bates K.N."/>
            <person name="Beard L.M."/>
            <person name="Beare D.M."/>
            <person name="Beasley O.P."/>
            <person name="Bird C.P."/>
            <person name="Blakey S.E."/>
            <person name="Bridgeman A.M."/>
            <person name="Brown A.J."/>
            <person name="Buck D."/>
            <person name="Burrill W.D."/>
            <person name="Butler A.P."/>
            <person name="Carder C."/>
            <person name="Carter N.P."/>
            <person name="Chapman J.C."/>
            <person name="Clamp M."/>
            <person name="Clark G."/>
            <person name="Clark L.N."/>
            <person name="Clark S.Y."/>
            <person name="Clee C.M."/>
            <person name="Clegg S."/>
            <person name="Cobley V.E."/>
            <person name="Collier R.E."/>
            <person name="Connor R.E."/>
            <person name="Corby N.R."/>
            <person name="Coulson A."/>
            <person name="Coville G.J."/>
            <person name="Deadman R."/>
            <person name="Dhami P.D."/>
            <person name="Dunn M."/>
            <person name="Ellington A.G."/>
            <person name="Frankland J.A."/>
            <person name="Fraser A."/>
            <person name="French L."/>
            <person name="Garner P."/>
            <person name="Grafham D.V."/>
            <person name="Griffiths C."/>
            <person name="Griffiths M.N.D."/>
            <person name="Gwilliam R."/>
            <person name="Hall R.E."/>
            <person name="Hammond S."/>
            <person name="Harley J.L."/>
            <person name="Heath P.D."/>
            <person name="Ho S."/>
            <person name="Holden J.L."/>
            <person name="Howden P.J."/>
            <person name="Huckle E."/>
            <person name="Hunt A.R."/>
            <person name="Hunt S.E."/>
            <person name="Jekosch K."/>
            <person name="Johnson C.M."/>
            <person name="Johnson D."/>
            <person name="Kay M.P."/>
            <person name="Kimberley A.M."/>
            <person name="King A."/>
            <person name="Knights A."/>
            <person name="Laird G.K."/>
            <person name="Lawlor S."/>
            <person name="Lehvaeslaiho M.H."/>
            <person name="Leversha M.A."/>
            <person name="Lloyd C."/>
            <person name="Lloyd D.M."/>
            <person name="Lovell J.D."/>
            <person name="Marsh V.L."/>
            <person name="Martin S.L."/>
            <person name="McConnachie L.J."/>
            <person name="McLay K."/>
            <person name="McMurray A.A."/>
            <person name="Milne S.A."/>
            <person name="Mistry D."/>
            <person name="Moore M.J.F."/>
            <person name="Mullikin J.C."/>
            <person name="Nickerson T."/>
            <person name="Oliver K."/>
            <person name="Parker A."/>
            <person name="Patel R."/>
            <person name="Pearce T.A.V."/>
            <person name="Peck A.I."/>
            <person name="Phillimore B.J.C.T."/>
            <person name="Prathalingam S.R."/>
            <person name="Plumb R.W."/>
            <person name="Ramsay H."/>
            <person name="Rice C.M."/>
            <person name="Ross M.T."/>
            <person name="Scott C.E."/>
            <person name="Sehra H.K."/>
            <person name="Shownkeen R."/>
            <person name="Sims S."/>
            <person name="Skuce C.D."/>
            <person name="Smith M.L."/>
            <person name="Soderlund C."/>
            <person name="Steward C.A."/>
            <person name="Sulston J.E."/>
            <person name="Swann R.M."/>
            <person name="Sycamore N."/>
            <person name="Taylor R."/>
            <person name="Tee L."/>
            <person name="Thomas D.W."/>
            <person name="Thorpe A."/>
            <person name="Tracey A."/>
            <person name="Tromans A.C."/>
            <person name="Vaudin M."/>
            <person name="Wall M."/>
            <person name="Wallis J.M."/>
            <person name="Whitehead S.L."/>
            <person name="Whittaker P."/>
            <person name="Willey D.L."/>
            <person name="Williams L."/>
            <person name="Williams S.A."/>
            <person name="Wilming L."/>
            <person name="Wray P.W."/>
            <person name="Hubbard T."/>
            <person name="Durbin R.M."/>
            <person name="Bentley D.R."/>
            <person name="Beck S."/>
            <person name="Rogers J."/>
        </authorList>
    </citation>
    <scope>NUCLEOTIDE SEQUENCE [LARGE SCALE GENOMIC DNA]</scope>
</reference>
<reference key="4">
    <citation type="journal article" date="2004" name="Genome Res.">
        <title>The status, quality, and expansion of the NIH full-length cDNA project: the Mammalian Gene Collection (MGC).</title>
        <authorList>
            <consortium name="The MGC Project Team"/>
        </authorList>
    </citation>
    <scope>NUCLEOTIDE SEQUENCE [LARGE SCALE MRNA] (ISOFORM 1)</scope>
    <scope>VARIANTS GLY-969 AND HIS-1366</scope>
    <source>
        <tissue>Testis</tissue>
    </source>
</reference>
<reference key="5">
    <citation type="journal article" date="2004" name="Nat. Genet.">
        <title>Complete sequencing and characterization of 21,243 full-length human cDNAs.</title>
        <authorList>
            <person name="Ota T."/>
            <person name="Suzuki Y."/>
            <person name="Nishikawa T."/>
            <person name="Otsuki T."/>
            <person name="Sugiyama T."/>
            <person name="Irie R."/>
            <person name="Wakamatsu A."/>
            <person name="Hayashi K."/>
            <person name="Sato H."/>
            <person name="Nagai K."/>
            <person name="Kimura K."/>
            <person name="Makita H."/>
            <person name="Sekine M."/>
            <person name="Obayashi M."/>
            <person name="Nishi T."/>
            <person name="Shibahara T."/>
            <person name="Tanaka T."/>
            <person name="Ishii S."/>
            <person name="Yamamoto J."/>
            <person name="Saito K."/>
            <person name="Kawai Y."/>
            <person name="Isono Y."/>
            <person name="Nakamura Y."/>
            <person name="Nagahari K."/>
            <person name="Murakami K."/>
            <person name="Yasuda T."/>
            <person name="Iwayanagi T."/>
            <person name="Wagatsuma M."/>
            <person name="Shiratori A."/>
            <person name="Sudo H."/>
            <person name="Hosoiri T."/>
            <person name="Kaku Y."/>
            <person name="Kodaira H."/>
            <person name="Kondo H."/>
            <person name="Sugawara M."/>
            <person name="Takahashi M."/>
            <person name="Kanda K."/>
            <person name="Yokoi T."/>
            <person name="Furuya T."/>
            <person name="Kikkawa E."/>
            <person name="Omura Y."/>
            <person name="Abe K."/>
            <person name="Kamihara K."/>
            <person name="Katsuta N."/>
            <person name="Sato K."/>
            <person name="Tanikawa M."/>
            <person name="Yamazaki M."/>
            <person name="Ninomiya K."/>
            <person name="Ishibashi T."/>
            <person name="Yamashita H."/>
            <person name="Murakawa K."/>
            <person name="Fujimori K."/>
            <person name="Tanai H."/>
            <person name="Kimata M."/>
            <person name="Watanabe M."/>
            <person name="Hiraoka S."/>
            <person name="Chiba Y."/>
            <person name="Ishida S."/>
            <person name="Ono Y."/>
            <person name="Takiguchi S."/>
            <person name="Watanabe S."/>
            <person name="Yosida M."/>
            <person name="Hotuta T."/>
            <person name="Kusano J."/>
            <person name="Kanehori K."/>
            <person name="Takahashi-Fujii A."/>
            <person name="Hara H."/>
            <person name="Tanase T.-O."/>
            <person name="Nomura Y."/>
            <person name="Togiya S."/>
            <person name="Komai F."/>
            <person name="Hara R."/>
            <person name="Takeuchi K."/>
            <person name="Arita M."/>
            <person name="Imose N."/>
            <person name="Musashino K."/>
            <person name="Yuuki H."/>
            <person name="Oshima A."/>
            <person name="Sasaki N."/>
            <person name="Aotsuka S."/>
            <person name="Yoshikawa Y."/>
            <person name="Matsunawa H."/>
            <person name="Ichihara T."/>
            <person name="Shiohata N."/>
            <person name="Sano S."/>
            <person name="Moriya S."/>
            <person name="Momiyama H."/>
            <person name="Satoh N."/>
            <person name="Takami S."/>
            <person name="Terashima Y."/>
            <person name="Suzuki O."/>
            <person name="Nakagawa S."/>
            <person name="Senoh A."/>
            <person name="Mizoguchi H."/>
            <person name="Goto Y."/>
            <person name="Shimizu F."/>
            <person name="Wakebe H."/>
            <person name="Hishigaki H."/>
            <person name="Watanabe T."/>
            <person name="Sugiyama A."/>
            <person name="Takemoto M."/>
            <person name="Kawakami B."/>
            <person name="Yamazaki M."/>
            <person name="Watanabe K."/>
            <person name="Kumagai A."/>
            <person name="Itakura S."/>
            <person name="Fukuzumi Y."/>
            <person name="Fujimori Y."/>
            <person name="Komiyama M."/>
            <person name="Tashiro H."/>
            <person name="Tanigami A."/>
            <person name="Fujiwara T."/>
            <person name="Ono T."/>
            <person name="Yamada K."/>
            <person name="Fujii Y."/>
            <person name="Ozaki K."/>
            <person name="Hirao M."/>
            <person name="Ohmori Y."/>
            <person name="Kawabata A."/>
            <person name="Hikiji T."/>
            <person name="Kobatake N."/>
            <person name="Inagaki H."/>
            <person name="Ikema Y."/>
            <person name="Okamoto S."/>
            <person name="Okitani R."/>
            <person name="Kawakami T."/>
            <person name="Noguchi S."/>
            <person name="Itoh T."/>
            <person name="Shigeta K."/>
            <person name="Senba T."/>
            <person name="Matsumura K."/>
            <person name="Nakajima Y."/>
            <person name="Mizuno T."/>
            <person name="Morinaga M."/>
            <person name="Sasaki M."/>
            <person name="Togashi T."/>
            <person name="Oyama M."/>
            <person name="Hata H."/>
            <person name="Watanabe M."/>
            <person name="Komatsu T."/>
            <person name="Mizushima-Sugano J."/>
            <person name="Satoh T."/>
            <person name="Shirai Y."/>
            <person name="Takahashi Y."/>
            <person name="Nakagawa K."/>
            <person name="Okumura K."/>
            <person name="Nagase T."/>
            <person name="Nomura N."/>
            <person name="Kikuchi H."/>
            <person name="Masuho Y."/>
            <person name="Yamashita R."/>
            <person name="Nakai K."/>
            <person name="Yada T."/>
            <person name="Nakamura Y."/>
            <person name="Ohara O."/>
            <person name="Isogai T."/>
            <person name="Sugano S."/>
        </authorList>
    </citation>
    <scope>NUCLEOTIDE SEQUENCE [LARGE SCALE MRNA] OF 1-454 (ISOFORMS 1/2)</scope>
    <source>
        <tissue>Cerebellum</tissue>
    </source>
</reference>
<reference key="6">
    <citation type="journal article" date="2003" name="Dev. Cell">
        <title>Polo-like kinase 1 regulates Nlp, a centrosome protein involved in microtubule nucleation.</title>
        <authorList>
            <person name="Casenghi M."/>
            <person name="Meraldi P."/>
            <person name="Weinhart U."/>
            <person name="Duncan P.I."/>
            <person name="Korner R."/>
            <person name="Nigg E.A."/>
        </authorList>
    </citation>
    <scope>FUNCTION</scope>
    <scope>INTERACTION WITH GAMMA-TUBULIN AND TUBGCP4</scope>
    <scope>PHOSPHORYLATION</scope>
</reference>
<reference key="7">
    <citation type="journal article" date="2005" name="J. Cell Sci.">
        <title>Phosphorylation of Nlp by Plk1 negatively regulates its dynein-dynactin-dependent targeting to the centrosome.</title>
        <authorList>
            <person name="Casenghi M."/>
            <person name="Barr F.A."/>
            <person name="Nigg E.A."/>
        </authorList>
    </citation>
    <scope>FUNCTION</scope>
    <scope>SUBCELLULAR LOCATION</scope>
    <scope>PHOSPHORYLATION</scope>
</reference>
<reference key="8">
    <citation type="journal article" date="2007" name="J. Biol. Chem.">
        <title>Cell cycle-dependent expression of centrosomal ninein-like protein in human cells is regulated by the anaphase-promoting complex.</title>
        <authorList>
            <person name="Wang Y."/>
            <person name="Zhan Q."/>
        </authorList>
    </citation>
    <scope>INTERACTION WITH APC/C COMPLEX; CDC20 AND FZR1</scope>
    <scope>TISSUE SPECIFICITY</scope>
    <scope>DOMAIN</scope>
    <scope>UBIQUITINATION</scope>
    <scope>MUTAGENESIS OF 495-LYS--ASN-497 AND 633-ARG--LEU-636</scope>
</reference>
<reference key="9">
    <citation type="journal article" date="2008" name="Gynecol. Oncol.">
        <title>Increased expression of Nlp, a potential oncogene in ovarian cancer, and its implication in carcinogenesis.</title>
        <authorList>
            <person name="Qu D."/>
            <person name="Qu H."/>
            <person name="Fu M."/>
            <person name="Zhao X."/>
            <person name="Liu R."/>
            <person name="Sui L."/>
            <person name="Zhan Q."/>
        </authorList>
    </citation>
    <scope>FUNCTION</scope>
</reference>
<reference key="10">
    <citation type="journal article" date="2015" name="PLoS Genet.">
        <title>NINL and DZANK1 Co-function in Vesicle Transport and Are Essential for Photoreceptor Development in Zebrafish.</title>
        <authorList>
            <person name="Dona M."/>
            <person name="Bachmann-Gagescu R."/>
            <person name="Texier Y."/>
            <person name="Toedt G."/>
            <person name="Hetterschijt L."/>
            <person name="Tonnaer E.L."/>
            <person name="Peters T.A."/>
            <person name="van Beersum S.E."/>
            <person name="Bergboer J.G."/>
            <person name="Horn N."/>
            <person name="de Vrieze E."/>
            <person name="Slijkerman R.W."/>
            <person name="van Reeuwijk J."/>
            <person name="Flik G."/>
            <person name="Keunen J.E."/>
            <person name="Ueffing M."/>
            <person name="Gibson T.J."/>
            <person name="Roepman R."/>
            <person name="Boldt K."/>
            <person name="Kremer H."/>
            <person name="van Wijk E."/>
        </authorList>
    </citation>
    <scope>INTERACTION WITH DZANK1 (ISOFORM 2)</scope>
    <scope>SUBCELLULAR LOCATION</scope>
</reference>
<protein>
    <recommendedName>
        <fullName>Ninein-like protein</fullName>
    </recommendedName>
</protein>
<organism>
    <name type="scientific">Homo sapiens</name>
    <name type="common">Human</name>
    <dbReference type="NCBI Taxonomy" id="9606"/>
    <lineage>
        <taxon>Eukaryota</taxon>
        <taxon>Metazoa</taxon>
        <taxon>Chordata</taxon>
        <taxon>Craniata</taxon>
        <taxon>Vertebrata</taxon>
        <taxon>Euteleostomi</taxon>
        <taxon>Mammalia</taxon>
        <taxon>Eutheria</taxon>
        <taxon>Euarchontoglires</taxon>
        <taxon>Primates</taxon>
        <taxon>Haplorrhini</taxon>
        <taxon>Catarrhini</taxon>
        <taxon>Hominidae</taxon>
        <taxon>Homo</taxon>
    </lineage>
</organism>
<feature type="chain" id="PRO_0000259714" description="Ninein-like protein">
    <location>
        <begin position="1"/>
        <end position="1382"/>
    </location>
</feature>
<feature type="domain" description="EF-hand 1" evidence="4">
    <location>
        <begin position="7"/>
        <end position="42"/>
    </location>
</feature>
<feature type="domain" description="EF-hand 2" evidence="4">
    <location>
        <begin position="41"/>
        <end position="76"/>
    </location>
</feature>
<feature type="domain" description="EF-hand 3" evidence="4">
    <location>
        <begin position="196"/>
        <end position="231"/>
    </location>
</feature>
<feature type="domain" description="EF-hand 4" evidence="4">
    <location>
        <begin position="233"/>
        <end position="268"/>
    </location>
</feature>
<feature type="region of interest" description="Disordered" evidence="5">
    <location>
        <begin position="144"/>
        <end position="164"/>
    </location>
</feature>
<feature type="region of interest" description="Disordered" evidence="5">
    <location>
        <begin position="857"/>
        <end position="969"/>
    </location>
</feature>
<feature type="region of interest" description="Disordered" evidence="5">
    <location>
        <begin position="982"/>
        <end position="1006"/>
    </location>
</feature>
<feature type="coiled-coil region" evidence="3">
    <location>
        <begin position="384"/>
        <end position="424"/>
    </location>
</feature>
<feature type="coiled-coil region" evidence="3">
    <location>
        <begin position="484"/>
        <end position="579"/>
    </location>
</feature>
<feature type="coiled-coil region" evidence="3">
    <location>
        <begin position="616"/>
        <end position="699"/>
    </location>
</feature>
<feature type="coiled-coil region" evidence="3">
    <location>
        <begin position="1046"/>
        <end position="1375"/>
    </location>
</feature>
<feature type="short sequence motif" description="KEN box">
    <location>
        <begin position="495"/>
        <end position="497"/>
    </location>
</feature>
<feature type="short sequence motif" description="D-box">
    <location>
        <begin position="633"/>
        <end position="641"/>
    </location>
</feature>
<feature type="compositionally biased region" description="Basic and acidic residues" evidence="5">
    <location>
        <begin position="150"/>
        <end position="164"/>
    </location>
</feature>
<feature type="compositionally biased region" description="Low complexity" evidence="5">
    <location>
        <begin position="991"/>
        <end position="1004"/>
    </location>
</feature>
<feature type="binding site" evidence="4">
    <location>
        <position position="246"/>
    </location>
    <ligand>
        <name>Ca(2+)</name>
        <dbReference type="ChEBI" id="CHEBI:29108"/>
    </ligand>
</feature>
<feature type="binding site" evidence="4">
    <location>
        <position position="248"/>
    </location>
    <ligand>
        <name>Ca(2+)</name>
        <dbReference type="ChEBI" id="CHEBI:29108"/>
    </ligand>
</feature>
<feature type="binding site" evidence="4">
    <location>
        <position position="250"/>
    </location>
    <ligand>
        <name>Ca(2+)</name>
        <dbReference type="ChEBI" id="CHEBI:29108"/>
    </ligand>
</feature>
<feature type="binding site" evidence="4">
    <location>
        <position position="252"/>
    </location>
    <ligand>
        <name>Ca(2+)</name>
        <dbReference type="ChEBI" id="CHEBI:29108"/>
    </ligand>
</feature>
<feature type="binding site" evidence="4">
    <location>
        <position position="257"/>
    </location>
    <ligand>
        <name>Ca(2+)</name>
        <dbReference type="ChEBI" id="CHEBI:29108"/>
    </ligand>
</feature>
<feature type="modified residue" description="Phosphoserine" evidence="2">
    <location>
        <position position="148"/>
    </location>
</feature>
<feature type="splice variant" id="VSP_037883" description="In isoform 2." evidence="13">
    <location>
        <begin position="735"/>
        <end position="1083"/>
    </location>
</feature>
<feature type="sequence variant" id="VAR_059700" description="In dbSNP:rs6115203.">
    <original>G</original>
    <variation>V</variation>
    <location>
        <position position="79"/>
    </location>
</feature>
<feature type="sequence variant" id="VAR_059701" description="In dbSNP:rs34585177.">
    <original>S</original>
    <variation>R</variation>
    <location>
        <position position="191"/>
    </location>
</feature>
<feature type="sequence variant" id="VAR_059702" description="In dbSNP:rs13044759.">
    <original>R</original>
    <variation>W</variation>
    <location>
        <position position="276"/>
    </location>
</feature>
<feature type="sequence variant" id="VAR_059703" description="In dbSNP:rs379538.">
    <original>T</original>
    <variation>A</variation>
    <location>
        <position position="296"/>
    </location>
</feature>
<feature type="sequence variant" id="VAR_058509" description="In dbSNP:rs6115193." evidence="7">
    <original>R</original>
    <variation>G</variation>
    <location>
        <position position="969"/>
    </location>
</feature>
<feature type="sequence variant" id="VAR_059704" description="In dbSNP:rs428801.">
    <original>E</original>
    <variation>K</variation>
    <location>
        <position position="973"/>
    </location>
</feature>
<feature type="sequence variant" id="VAR_061688" description="In dbSNP:rs35666277.">
    <original>D</original>
    <variation>N</variation>
    <location>
        <position position="1077"/>
    </location>
</feature>
<feature type="sequence variant" id="VAR_061689" description="In dbSNP:rs41310175.">
    <original>R</original>
    <variation>C</variation>
    <location>
        <position position="1276"/>
    </location>
</feature>
<feature type="sequence variant" id="VAR_058510" description="In dbSNP:rs17857107." evidence="7">
    <original>R</original>
    <variation>H</variation>
    <location>
        <position position="1366"/>
    </location>
</feature>
<feature type="mutagenesis site" description="Disrupts binding to CDC20 and FZR1 and prevents ubiquitination and subsequent degradation of NINL; when associated with 633-A--A-636." evidence="9">
    <original>KEN</original>
    <variation>AAA</variation>
    <location>
        <begin position="495"/>
        <end position="497"/>
    </location>
</feature>
<feature type="mutagenesis site" description="Disrupts binding to CDC20 and FZR1 and prevents ubiquitination and subsequent degradation of NINL; when associated with 495-A--A-497." evidence="9">
    <original>RTQL</original>
    <variation>AAAA</variation>
    <location>
        <begin position="633"/>
        <end position="636"/>
    </location>
</feature>
<feature type="sequence conflict" description="In Ref. 5; BAH11644." evidence="14" ref="5">
    <original>V</original>
    <variation>L</variation>
    <location>
        <position position="303"/>
    </location>
</feature>
<feature type="sequence conflict" description="In Ref. 4; AAH36380." evidence="14" ref="4">
    <location>
        <begin position="958"/>
        <end position="959"/>
    </location>
</feature>
<sequence>MDEEENHYVSQLREVYSSCDTTGTGFLDRQELTQLCLKLHLEQQLPVLLQTLLGNDHFARVNFEEFKEGFVAVLSSNAGVRPSDEDSSSLESAASSAIPPKYVNGSKWYGRRSRPELCDAATEARRVPEQQTQASLKSHLWRSASLESVESPKSDEEAESTKEAQNELFEAQGQLQTWDSEDFGSPQKSCSPSFDTPESQIRGVWEELGVGSSGHLSEQELAVVCQSVGLQGLEKEELEDLFNKLDQDGDGKVSLEEFQLGLFSHEPALLLESSTRVKPSKAWSHYQVPEESGCHTTTTSSLVSLCSSLRLFSSIDDGSGFAFPDQVLAMWTQEGIQNGREILQSLDFSVDEKVNLLELTWALDNELMTVDSAVQQAALACYHQELSYQQGQVEQLARERDKARQDLERAEKRNLEFVKEMDDCHSTLEQLTEKKIKHLEQGYRERLSLLRSEVEAERELFWEQAHRQRAALEWDVGRLQAEEAGLREKLTLALKENSRLQKEIVEVVEKLSDSERLALKLQKDLEFVLKDKLEPQSAELLAQEERFAAVLKEYELKCRDLQDRNDELQAELEGLWARLPKNRHSPSWSPDGRRRQLPGLGPAGISFLGNSAPVSIETELMMEQVKEHYQDLRTQLETKVNYYEREIAALKRNFEKERKDMEQARRREVSVLEGQKADLEELHEKSQEVIWGLQEQLQDTARGPEPEQMGLAPCCTQALCGLALRHHSHLQQIRREAEAELSGELSGLGALPARRDLTLELEEPPQGPLPRGSQRSEQLELERALKLQPCASEKRAQMCVSLALEEEELELARGKRVDGPSLEAEMQALPKDGLVAGSGQEGTRGLLPLRPGCGERPLAWLAPGDGRESEEAAGAGPRRRQAQDTEATQSPAPAPAPASHGPSERWSRMQPCGVDGDIVPKEPEPFGASAAGLEQPGARELPLLGTERDASQTQPRMWEPPLRPAASCRGQAERLQAIQEERARSWSRGTQEQASEQQARAEGALEPGCHKHSVEVARRGSLPSHLQLADPQGSWQEQLAAPEEGETKIALEREKDDMETKLLHLEDVVRALEKHVDLRENDRLEFHRLSEENTLLKNDLGRVRQELEAAESTHDAQRKEIEVLKKDKEKACSEMEVLNRQNQNYKDQLSQLNVRVLQLGQEASTHQAQNEEHRVTIQMLTQSLEEVVRSGQQQSDQIQKLRVELECLNQEHQSLQLPWSELTQTLEESQDQVQGAHLRLRQAQAQHLQEVRLVPQDRVAELHRLLSLQGEQARRRLDAQREEHEKQLKATEERVEEAEMILKNMEMLLQEKVDKLKEQFEKNTKSDLLLKELYVENAHLVRALQATEEKQRGAEKQSRLLEEKVRALNKLVSRIAPAALSV</sequence>
<keyword id="KW-0025">Alternative splicing</keyword>
<keyword id="KW-0106">Calcium</keyword>
<keyword id="KW-0175">Coiled coil</keyword>
<keyword id="KW-0963">Cytoplasm</keyword>
<keyword id="KW-0206">Cytoskeleton</keyword>
<keyword id="KW-0479">Metal-binding</keyword>
<keyword id="KW-0493">Microtubule</keyword>
<keyword id="KW-0597">Phosphoprotein</keyword>
<keyword id="KW-1267">Proteomics identification</keyword>
<keyword id="KW-1185">Reference proteome</keyword>
<keyword id="KW-0677">Repeat</keyword>
<keyword id="KW-0832">Ubl conjugation</keyword>
<accession>Q9Y2I6</accession>
<accession>A6NJN0</accession>
<accession>B3V9H6</accession>
<accession>B7Z1V8</accession>
<accession>Q5JYP0</accession>
<accession>Q8NE38</accession>
<accession>Q9NQE3</accession>
<comment type="function">
    <text evidence="1 6 8 10">Involved in the microtubule organization in interphase cells. Overexpression induces the fragmentation of the Golgi, and causes lysosomes to disperse toward the cell periphery; it also interferes with mitotic spindle assembly. Involved in vesicle transport in photoreceptor cells (By similarity). May play a role in ovarian carcinogenesis.</text>
</comment>
<comment type="subunit">
    <text evidence="6 9 11 12">Interacts with gamma-tubulin and TUBGCP4. Interacts with anaphase promoting complex/cyclosome (APC/C). Interacts with CDC20 and FZR1. Isoform 2 interacts with LCA5 and USH2A. Isoform 2 interacts with DZANK1 (PubMed:26485514).</text>
</comment>
<comment type="interaction">
    <interactant intactId="EBI-719716">
        <id>Q9Y2I6</id>
    </interactant>
    <interactant intactId="EBI-10247802">
        <id>Q8IYE0-2</id>
        <label>CCDC146</label>
    </interactant>
    <organismsDiffer>false</organismsDiffer>
    <experiments>3</experiments>
</comment>
<comment type="interaction">
    <interactant intactId="EBI-719716">
        <id>Q9Y2I6</id>
    </interactant>
    <interactant intactId="EBI-10175300">
        <id>Q8TD31-3</id>
        <label>CCHCR1</label>
    </interactant>
    <organismsDiffer>false</organismsDiffer>
    <experiments>3</experiments>
</comment>
<comment type="interaction">
    <interactant intactId="EBI-719716">
        <id>Q9Y2I6</id>
    </interactant>
    <interactant intactId="EBI-719941">
        <id>Q3B820</id>
        <label>FAM161A</label>
    </interactant>
    <organismsDiffer>false</organismsDiffer>
    <experiments>3</experiments>
</comment>
<comment type="interaction">
    <interactant intactId="EBI-719716">
        <id>Q9Y2I6</id>
    </interactant>
    <interactant intactId="EBI-2514791">
        <id>Q96CS2</id>
        <label>HAUS1</label>
    </interactant>
    <organismsDiffer>false</organismsDiffer>
    <experiments>3</experiments>
</comment>
<comment type="interaction">
    <interactant intactId="EBI-719716">
        <id>Q9Y2I6</id>
    </interactant>
    <interactant intactId="EBI-399080">
        <id>Q92993</id>
        <label>KAT5</label>
    </interactant>
    <organismsDiffer>false</organismsDiffer>
    <experiments>3</experiments>
</comment>
<comment type="interaction">
    <interactant intactId="EBI-719716">
        <id>Q9Y2I6</id>
    </interactant>
    <interactant intactId="EBI-8833581">
        <id>Q8NA19</id>
        <label>L3MBTL4</label>
    </interactant>
    <organismsDiffer>false</organismsDiffer>
    <experiments>3</experiments>
</comment>
<comment type="interaction">
    <interactant intactId="EBI-719716">
        <id>Q9Y2I6</id>
    </interactant>
    <interactant intactId="EBI-740773">
        <id>Q96IZ5</id>
        <label>RBM41</label>
    </interactant>
    <organismsDiffer>false</organismsDiffer>
    <experiments>3</experiments>
</comment>
<comment type="interaction">
    <interactant intactId="EBI-719716">
        <id>Q9Y2I6</id>
    </interactant>
    <interactant intactId="EBI-743428">
        <id>Q9P2K3</id>
        <label>RCOR3</label>
    </interactant>
    <organismsDiffer>false</organismsDiffer>
    <experiments>4</experiments>
</comment>
<comment type="interaction">
    <interactant intactId="EBI-719716">
        <id>Q9Y2I6</id>
    </interactant>
    <interactant intactId="EBI-747035">
        <id>Q9H788</id>
        <label>SH2D4A</label>
    </interactant>
    <organismsDiffer>false</organismsDiffer>
    <experiments>3</experiments>
</comment>
<comment type="interaction">
    <interactant intactId="EBI-719716">
        <id>Q9Y2I6</id>
    </interactant>
    <interactant intactId="EBI-740727">
        <id>Q8TAU3</id>
        <label>ZNF417</label>
    </interactant>
    <organismsDiffer>false</organismsDiffer>
    <experiments>4</experiments>
</comment>
<comment type="subcellular location">
    <subcellularLocation>
        <location evidence="8 12">Cytoplasm</location>
        <location evidence="8 12">Cytoskeleton</location>
        <location evidence="8 12">Microtubule organizing center</location>
        <location evidence="8 12">Centrosome</location>
    </subcellularLocation>
    <subcellularLocation>
        <location evidence="8">Cytoplasm</location>
    </subcellularLocation>
    <text>In interphase cells, NINL is transported to the centrosomes by the dynein-dynactin motor complex (PubMed:16254247). During centrosome maturation, PLK1 directly phosphorylates NINL resulting in its release into the cytoplasm (PubMed:16254247).</text>
</comment>
<comment type="alternative products">
    <event type="alternative splicing"/>
    <isoform>
        <id>Q9Y2I6-1</id>
        <name>1</name>
        <name evidence="13">NLP(isoA)</name>
        <sequence type="displayed"/>
    </isoform>
    <isoform>
        <id>Q9Y2I6-2</id>
        <name>2</name>
        <name evidence="13">NLP(isoB)</name>
        <sequence type="described" ref="VSP_037883"/>
    </isoform>
</comment>
<comment type="tissue specificity">
    <text evidence="9 11">Expressed in KYSE-150 esophageal carcinoma, HeLa cervical carcinoma and U2OS osteosarcoma cells. Expression is regulated in a cell cycle-dependent manner and peaks during G2/M phase (at protein level). Expressed in fetal heart, skeletal muscle, liver, lung and cochlea, and in adult brain, testis, kidney and retina.</text>
</comment>
<comment type="domain">
    <text evidence="9">The KEN and D (destructive) boxes are required for the cell cycle-controlled NINL degradation by the APC/C pathway.</text>
</comment>
<comment type="PTM">
    <text evidence="6 8">Phosphorylated by PLK1 which disrupts its centrosome association and interaction with gamma-tubulin.</text>
</comment>
<comment type="PTM">
    <text evidence="9">Ubiquitinated by the APC/C complex leading to its degradation.</text>
</comment>
<comment type="sequence caution" evidence="14">
    <conflict type="erroneous initiation">
        <sequence resource="EMBL-CDS" id="BAA76824"/>
    </conflict>
</comment>
<comment type="sequence caution" evidence="14">
    <conflict type="erroneous initiation">
        <sequence resource="EMBL-CDS" id="BAH11644"/>
    </conflict>
    <text>Truncated N-terminus.</text>
</comment>
<comment type="sequence caution" evidence="14">
    <conflict type="erroneous termination">
        <sequence resource="EMBL-CDS" id="BAH11644"/>
    </conflict>
    <text>Truncated C-terminus.</text>
</comment>